<evidence type="ECO:0000250" key="1">
    <source>
        <dbReference type="UniProtKB" id="P00403"/>
    </source>
</evidence>
<evidence type="ECO:0000250" key="2">
    <source>
        <dbReference type="UniProtKB" id="P00410"/>
    </source>
</evidence>
<evidence type="ECO:0000250" key="3">
    <source>
        <dbReference type="UniProtKB" id="P68530"/>
    </source>
</evidence>
<evidence type="ECO:0000305" key="4"/>
<organism>
    <name type="scientific">Lagothrix lagotricha</name>
    <name type="common">Brown woolly monkey</name>
    <name type="synonym">Humboldt's woolly monkey</name>
    <dbReference type="NCBI Taxonomy" id="9519"/>
    <lineage>
        <taxon>Eukaryota</taxon>
        <taxon>Metazoa</taxon>
        <taxon>Chordata</taxon>
        <taxon>Craniata</taxon>
        <taxon>Vertebrata</taxon>
        <taxon>Euteleostomi</taxon>
        <taxon>Mammalia</taxon>
        <taxon>Eutheria</taxon>
        <taxon>Euarchontoglires</taxon>
        <taxon>Primates</taxon>
        <taxon>Haplorrhini</taxon>
        <taxon>Platyrrhini</taxon>
        <taxon>Atelidae</taxon>
        <taxon>Atelinae</taxon>
        <taxon>Lagothrix</taxon>
    </lineage>
</organism>
<reference key="1">
    <citation type="journal article" date="1994" name="J. Mol. Evol.">
        <title>Evolution of the primate cytochrome c oxidase subunit II gene.</title>
        <authorList>
            <person name="Adkins R.M."/>
            <person name="Honeycutt R.L."/>
        </authorList>
    </citation>
    <scope>NUCLEOTIDE SEQUENCE [GENOMIC DNA]</scope>
</reference>
<accession>P98036</accession>
<comment type="function">
    <text evidence="2">Component of the cytochrome c oxidase, the last enzyme in the mitochondrial electron transport chain which drives oxidative phosphorylation. The respiratory chain contains 3 multisubunit complexes succinate dehydrogenase (complex II, CII), ubiquinol-cytochrome c oxidoreductase (cytochrome b-c1 complex, complex III, CIII) and cytochrome c oxidase (complex IV, CIV), that cooperate to transfer electrons derived from NADH and succinate to molecular oxygen, creating an electrochemical gradient over the inner membrane that drives transmembrane transport and the ATP synthase. Cytochrome c oxidase is the component of the respiratory chain that catalyzes the reduction of oxygen to water. Electrons originating from reduced cytochrome c in the intermembrane space (IMS) are transferred via the dinuclear copper A center (CU(A)) of subunit 2 and heme A of subunit 1 to the active site in subunit 1, a binuclear center (BNC) formed by heme A3 and copper B (CU(B)). The BNC reduces molecular oxygen to 2 water molecules using 4 electrons from cytochrome c in the IMS and 4 protons from the mitochondrial matrix.</text>
</comment>
<comment type="catalytic activity">
    <reaction evidence="2">
        <text>4 Fe(II)-[cytochrome c] + O2 + 8 H(+)(in) = 4 Fe(III)-[cytochrome c] + 2 H2O + 4 H(+)(out)</text>
        <dbReference type="Rhea" id="RHEA:11436"/>
        <dbReference type="Rhea" id="RHEA-COMP:10350"/>
        <dbReference type="Rhea" id="RHEA-COMP:14399"/>
        <dbReference type="ChEBI" id="CHEBI:15377"/>
        <dbReference type="ChEBI" id="CHEBI:15378"/>
        <dbReference type="ChEBI" id="CHEBI:15379"/>
        <dbReference type="ChEBI" id="CHEBI:29033"/>
        <dbReference type="ChEBI" id="CHEBI:29034"/>
        <dbReference type="EC" id="7.1.1.9"/>
    </reaction>
    <physiologicalReaction direction="left-to-right" evidence="2">
        <dbReference type="Rhea" id="RHEA:11437"/>
    </physiologicalReaction>
</comment>
<comment type="cofactor">
    <cofactor evidence="3">
        <name>Cu cation</name>
        <dbReference type="ChEBI" id="CHEBI:23378"/>
    </cofactor>
    <text evidence="3">Binds a dinuclear copper A center per subunit.</text>
</comment>
<comment type="subunit">
    <text evidence="1 3">Component of the cytochrome c oxidase (complex IV, CIV), a multisubunit enzyme composed of 14 subunits. The complex is composed of a catalytic core of 3 subunits MT-CO1, MT-CO2 and MT-CO3, encoded in the mitochondrial DNA, and 11 supernumerary subunits COX4I, COX5A, COX5B, COX6A, COX6B, COX6C, COX7A, COX7B, COX7C, COX8 and NDUFA4, which are encoded in the nuclear genome. The complex exists as a monomer or a dimer and forms supercomplexes (SCs) in the inner mitochondrial membrane with NADH-ubiquinone oxidoreductase (complex I, CI) and ubiquinol-cytochrome c oxidoreductase (cytochrome b-c1 complex, complex III, CIII), resulting in different assemblies (supercomplex SCI(1)III(2)IV(1) and megacomplex MCI(2)III(2)IV(2)) (By similarity). Found in a complex with TMEM177, COA6, COX18, COX20, SCO1 and SCO2. Interacts with TMEM177 in a COX20-dependent manner. Interacts with COX20. Interacts with COX16 (By similarity).</text>
</comment>
<comment type="subcellular location">
    <subcellularLocation>
        <location evidence="3">Mitochondrion inner membrane</location>
        <topology evidence="3">Multi-pass membrane protein</topology>
    </subcellularLocation>
</comment>
<comment type="similarity">
    <text evidence="4">Belongs to the cytochrome c oxidase subunit 2 family.</text>
</comment>
<keyword id="KW-0186">Copper</keyword>
<keyword id="KW-0249">Electron transport</keyword>
<keyword id="KW-0460">Magnesium</keyword>
<keyword id="KW-0472">Membrane</keyword>
<keyword id="KW-0479">Metal-binding</keyword>
<keyword id="KW-0496">Mitochondrion</keyword>
<keyword id="KW-0999">Mitochondrion inner membrane</keyword>
<keyword id="KW-0679">Respiratory chain</keyword>
<keyword id="KW-1278">Translocase</keyword>
<keyword id="KW-0812">Transmembrane</keyword>
<keyword id="KW-1133">Transmembrane helix</keyword>
<keyword id="KW-0813">Transport</keyword>
<proteinExistence type="inferred from homology"/>
<dbReference type="EC" id="7.1.1.9"/>
<dbReference type="EMBL" id="L22779">
    <property type="protein sequence ID" value="AAA20565.1"/>
    <property type="molecule type" value="Genomic_DNA"/>
</dbReference>
<dbReference type="PIR" id="I84422">
    <property type="entry name" value="I84422"/>
</dbReference>
<dbReference type="SMR" id="P98036"/>
<dbReference type="GO" id="GO:0005743">
    <property type="term" value="C:mitochondrial inner membrane"/>
    <property type="evidence" value="ECO:0007669"/>
    <property type="project" value="UniProtKB-SubCell"/>
</dbReference>
<dbReference type="GO" id="GO:0045277">
    <property type="term" value="C:respiratory chain complex IV"/>
    <property type="evidence" value="ECO:0000250"/>
    <property type="project" value="UniProtKB"/>
</dbReference>
<dbReference type="GO" id="GO:0005507">
    <property type="term" value="F:copper ion binding"/>
    <property type="evidence" value="ECO:0007669"/>
    <property type="project" value="InterPro"/>
</dbReference>
<dbReference type="GO" id="GO:0004129">
    <property type="term" value="F:cytochrome-c oxidase activity"/>
    <property type="evidence" value="ECO:0007669"/>
    <property type="project" value="UniProtKB-EC"/>
</dbReference>
<dbReference type="GO" id="GO:0042773">
    <property type="term" value="P:ATP synthesis coupled electron transport"/>
    <property type="evidence" value="ECO:0007669"/>
    <property type="project" value="TreeGrafter"/>
</dbReference>
<dbReference type="CDD" id="cd13912">
    <property type="entry name" value="CcO_II_C"/>
    <property type="match status" value="1"/>
</dbReference>
<dbReference type="FunFam" id="1.10.287.90:FF:000001">
    <property type="entry name" value="Cytochrome c oxidase subunit 2"/>
    <property type="match status" value="1"/>
</dbReference>
<dbReference type="FunFam" id="2.60.40.420:FF:000001">
    <property type="entry name" value="Cytochrome c oxidase subunit 2"/>
    <property type="match status" value="1"/>
</dbReference>
<dbReference type="Gene3D" id="1.10.287.90">
    <property type="match status" value="1"/>
</dbReference>
<dbReference type="Gene3D" id="2.60.40.420">
    <property type="entry name" value="Cupredoxins - blue copper proteins"/>
    <property type="match status" value="1"/>
</dbReference>
<dbReference type="InterPro" id="IPR045187">
    <property type="entry name" value="CcO_II"/>
</dbReference>
<dbReference type="InterPro" id="IPR002429">
    <property type="entry name" value="CcO_II-like_C"/>
</dbReference>
<dbReference type="InterPro" id="IPR034210">
    <property type="entry name" value="CcO_II_C"/>
</dbReference>
<dbReference type="InterPro" id="IPR001505">
    <property type="entry name" value="Copper_CuA"/>
</dbReference>
<dbReference type="InterPro" id="IPR008972">
    <property type="entry name" value="Cupredoxin"/>
</dbReference>
<dbReference type="InterPro" id="IPR014222">
    <property type="entry name" value="Cyt_c_oxidase_su2"/>
</dbReference>
<dbReference type="InterPro" id="IPR011759">
    <property type="entry name" value="Cyt_c_oxidase_su2_TM_dom"/>
</dbReference>
<dbReference type="InterPro" id="IPR036257">
    <property type="entry name" value="Cyt_c_oxidase_su2_TM_sf"/>
</dbReference>
<dbReference type="NCBIfam" id="TIGR02866">
    <property type="entry name" value="CoxB"/>
    <property type="match status" value="1"/>
</dbReference>
<dbReference type="PANTHER" id="PTHR22888:SF9">
    <property type="entry name" value="CYTOCHROME C OXIDASE SUBUNIT 2"/>
    <property type="match status" value="1"/>
</dbReference>
<dbReference type="PANTHER" id="PTHR22888">
    <property type="entry name" value="CYTOCHROME C OXIDASE, SUBUNIT II"/>
    <property type="match status" value="1"/>
</dbReference>
<dbReference type="Pfam" id="PF00116">
    <property type="entry name" value="COX2"/>
    <property type="match status" value="1"/>
</dbReference>
<dbReference type="Pfam" id="PF02790">
    <property type="entry name" value="COX2_TM"/>
    <property type="match status" value="1"/>
</dbReference>
<dbReference type="PRINTS" id="PR01166">
    <property type="entry name" value="CYCOXIDASEII"/>
</dbReference>
<dbReference type="SUPFAM" id="SSF49503">
    <property type="entry name" value="Cupredoxins"/>
    <property type="match status" value="1"/>
</dbReference>
<dbReference type="SUPFAM" id="SSF81464">
    <property type="entry name" value="Cytochrome c oxidase subunit II-like, transmembrane region"/>
    <property type="match status" value="1"/>
</dbReference>
<dbReference type="PROSITE" id="PS00078">
    <property type="entry name" value="COX2"/>
    <property type="match status" value="1"/>
</dbReference>
<dbReference type="PROSITE" id="PS50857">
    <property type="entry name" value="COX2_CUA"/>
    <property type="match status" value="1"/>
</dbReference>
<dbReference type="PROSITE" id="PS50999">
    <property type="entry name" value="COX2_TM"/>
    <property type="match status" value="1"/>
</dbReference>
<gene>
    <name type="primary">MT-CO2</name>
    <name type="synonym">COII</name>
    <name type="synonym">COXII</name>
    <name type="synonym">MTCO2</name>
</gene>
<feature type="chain" id="PRO_0000183613" description="Cytochrome c oxidase subunit 2">
    <location>
        <begin position="1"/>
        <end position="231"/>
    </location>
</feature>
<feature type="topological domain" description="Mitochondrial intermembrane" evidence="3">
    <location>
        <begin position="1"/>
        <end position="14"/>
    </location>
</feature>
<feature type="transmembrane region" description="Helical; Name=I" evidence="3">
    <location>
        <begin position="15"/>
        <end position="45"/>
    </location>
</feature>
<feature type="topological domain" description="Mitochondrial matrix" evidence="3">
    <location>
        <begin position="46"/>
        <end position="59"/>
    </location>
</feature>
<feature type="transmembrane region" description="Helical; Name=II" evidence="3">
    <location>
        <begin position="60"/>
        <end position="87"/>
    </location>
</feature>
<feature type="topological domain" description="Mitochondrial intermembrane" evidence="3">
    <location>
        <begin position="88"/>
        <end position="231"/>
    </location>
</feature>
<feature type="binding site" evidence="3">
    <location>
        <position position="161"/>
    </location>
    <ligand>
        <name>Cu cation</name>
        <dbReference type="ChEBI" id="CHEBI:23378"/>
        <label>A1</label>
    </ligand>
</feature>
<feature type="binding site" evidence="3">
    <location>
        <position position="196"/>
    </location>
    <ligand>
        <name>Cu cation</name>
        <dbReference type="ChEBI" id="CHEBI:23378"/>
        <label>A1</label>
    </ligand>
</feature>
<feature type="binding site" evidence="3">
    <location>
        <position position="196"/>
    </location>
    <ligand>
        <name>Cu cation</name>
        <dbReference type="ChEBI" id="CHEBI:23378"/>
        <label>A2</label>
    </ligand>
</feature>
<feature type="binding site" evidence="3">
    <location>
        <position position="198"/>
    </location>
    <ligand>
        <name>Cu cation</name>
        <dbReference type="ChEBI" id="CHEBI:23378"/>
        <label>A2</label>
    </ligand>
</feature>
<feature type="binding site" evidence="3">
    <location>
        <position position="198"/>
    </location>
    <ligand>
        <name>Mg(2+)</name>
        <dbReference type="ChEBI" id="CHEBI:18420"/>
        <note>ligand shared with MT-CO1</note>
    </ligand>
</feature>
<feature type="binding site" evidence="3">
    <location>
        <position position="200"/>
    </location>
    <ligand>
        <name>Cu cation</name>
        <dbReference type="ChEBI" id="CHEBI:23378"/>
        <label>A1</label>
    </ligand>
</feature>
<feature type="binding site" evidence="3">
    <location>
        <position position="200"/>
    </location>
    <ligand>
        <name>Cu cation</name>
        <dbReference type="ChEBI" id="CHEBI:23378"/>
        <label>A2</label>
    </ligand>
</feature>
<feature type="binding site" evidence="3">
    <location>
        <position position="204"/>
    </location>
    <ligand>
        <name>Cu cation</name>
        <dbReference type="ChEBI" id="CHEBI:23378"/>
        <label>A2</label>
    </ligand>
</feature>
<feature type="binding site" evidence="3">
    <location>
        <position position="207"/>
    </location>
    <ligand>
        <name>Cu cation</name>
        <dbReference type="ChEBI" id="CHEBI:23378"/>
        <label>A1</label>
    </ligand>
</feature>
<geneLocation type="mitochondrion"/>
<name>COX2_LAGLA</name>
<sequence length="231" mass="26557">MAHPAQLGLQNATSPIMEELIAFHDHALMIIFLISSLVLYIISLMLTTKLTHTSTMNAQEIEMVWTILPAIILIMIALPSLRILYMTDEFNKPYLTLKAIGHQWYWSYEYSDYVDLAFDYYITPTYFLEPGEFRLLEVDNRTTLPMEADIRMLISSQDVLHSWAVPSLGVKTDAIPGRLNQAMLASMRPGLFYGQCSEICGSNHSFMPIVLEFIYFQDFEVWASYLYIVSL</sequence>
<protein>
    <recommendedName>
        <fullName>Cytochrome c oxidase subunit 2</fullName>
        <ecNumber>7.1.1.9</ecNumber>
    </recommendedName>
    <alternativeName>
        <fullName>Cytochrome c oxidase polypeptide II</fullName>
    </alternativeName>
</protein>